<name>LIPA_SHESA</name>
<evidence type="ECO:0000255" key="1">
    <source>
        <dbReference type="HAMAP-Rule" id="MF_00206"/>
    </source>
</evidence>
<evidence type="ECO:0000255" key="2">
    <source>
        <dbReference type="PROSITE-ProRule" id="PRU01266"/>
    </source>
</evidence>
<feature type="chain" id="PRO_1000012278" description="Lipoyl synthase">
    <location>
        <begin position="1"/>
        <end position="321"/>
    </location>
</feature>
<feature type="domain" description="Radical SAM core" evidence="2">
    <location>
        <begin position="80"/>
        <end position="297"/>
    </location>
</feature>
<feature type="binding site" evidence="1">
    <location>
        <position position="68"/>
    </location>
    <ligand>
        <name>[4Fe-4S] cluster</name>
        <dbReference type="ChEBI" id="CHEBI:49883"/>
        <label>1</label>
    </ligand>
</feature>
<feature type="binding site" evidence="1">
    <location>
        <position position="73"/>
    </location>
    <ligand>
        <name>[4Fe-4S] cluster</name>
        <dbReference type="ChEBI" id="CHEBI:49883"/>
        <label>1</label>
    </ligand>
</feature>
<feature type="binding site" evidence="1">
    <location>
        <position position="79"/>
    </location>
    <ligand>
        <name>[4Fe-4S] cluster</name>
        <dbReference type="ChEBI" id="CHEBI:49883"/>
        <label>1</label>
    </ligand>
</feature>
<feature type="binding site" evidence="1">
    <location>
        <position position="94"/>
    </location>
    <ligand>
        <name>[4Fe-4S] cluster</name>
        <dbReference type="ChEBI" id="CHEBI:49883"/>
        <label>2</label>
        <note>4Fe-4S-S-AdoMet</note>
    </ligand>
</feature>
<feature type="binding site" evidence="1">
    <location>
        <position position="98"/>
    </location>
    <ligand>
        <name>[4Fe-4S] cluster</name>
        <dbReference type="ChEBI" id="CHEBI:49883"/>
        <label>2</label>
        <note>4Fe-4S-S-AdoMet</note>
    </ligand>
</feature>
<feature type="binding site" evidence="1">
    <location>
        <position position="101"/>
    </location>
    <ligand>
        <name>[4Fe-4S] cluster</name>
        <dbReference type="ChEBI" id="CHEBI:49883"/>
        <label>2</label>
        <note>4Fe-4S-S-AdoMet</note>
    </ligand>
</feature>
<feature type="binding site" evidence="1">
    <location>
        <position position="308"/>
    </location>
    <ligand>
        <name>[4Fe-4S] cluster</name>
        <dbReference type="ChEBI" id="CHEBI:49883"/>
        <label>1</label>
    </ligand>
</feature>
<protein>
    <recommendedName>
        <fullName evidence="1">Lipoyl synthase</fullName>
        <ecNumber evidence="1">2.8.1.8</ecNumber>
    </recommendedName>
    <alternativeName>
        <fullName evidence="1">Lip-syn</fullName>
        <shortName evidence="1">LS</shortName>
    </alternativeName>
    <alternativeName>
        <fullName evidence="1">Lipoate synthase</fullName>
    </alternativeName>
    <alternativeName>
        <fullName evidence="1">Lipoic acid synthase</fullName>
    </alternativeName>
    <alternativeName>
        <fullName evidence="1">Sulfur insertion protein LipA</fullName>
    </alternativeName>
</protein>
<keyword id="KW-0004">4Fe-4S</keyword>
<keyword id="KW-0963">Cytoplasm</keyword>
<keyword id="KW-0408">Iron</keyword>
<keyword id="KW-0411">Iron-sulfur</keyword>
<keyword id="KW-0479">Metal-binding</keyword>
<keyword id="KW-0949">S-adenosyl-L-methionine</keyword>
<keyword id="KW-0808">Transferase</keyword>
<proteinExistence type="inferred from homology"/>
<organism>
    <name type="scientific">Shewanella sp. (strain ANA-3)</name>
    <dbReference type="NCBI Taxonomy" id="94122"/>
    <lineage>
        <taxon>Bacteria</taxon>
        <taxon>Pseudomonadati</taxon>
        <taxon>Pseudomonadota</taxon>
        <taxon>Gammaproteobacteria</taxon>
        <taxon>Alteromonadales</taxon>
        <taxon>Shewanellaceae</taxon>
        <taxon>Shewanella</taxon>
    </lineage>
</organism>
<accession>A0KTV4</accession>
<comment type="function">
    <text evidence="1">Catalyzes the radical-mediated insertion of two sulfur atoms into the C-6 and C-8 positions of the octanoyl moiety bound to the lipoyl domains of lipoate-dependent enzymes, thereby converting the octanoylated domains into lipoylated derivatives.</text>
</comment>
<comment type="catalytic activity">
    <reaction evidence="1">
        <text>[[Fe-S] cluster scaffold protein carrying a second [4Fe-4S](2+) cluster] + N(6)-octanoyl-L-lysyl-[protein] + 2 oxidized [2Fe-2S]-[ferredoxin] + 2 S-adenosyl-L-methionine + 4 H(+) = [[Fe-S] cluster scaffold protein] + N(6)-[(R)-dihydrolipoyl]-L-lysyl-[protein] + 4 Fe(3+) + 2 hydrogen sulfide + 2 5'-deoxyadenosine + 2 L-methionine + 2 reduced [2Fe-2S]-[ferredoxin]</text>
        <dbReference type="Rhea" id="RHEA:16585"/>
        <dbReference type="Rhea" id="RHEA-COMP:9928"/>
        <dbReference type="Rhea" id="RHEA-COMP:10000"/>
        <dbReference type="Rhea" id="RHEA-COMP:10001"/>
        <dbReference type="Rhea" id="RHEA-COMP:10475"/>
        <dbReference type="Rhea" id="RHEA-COMP:14568"/>
        <dbReference type="Rhea" id="RHEA-COMP:14569"/>
        <dbReference type="ChEBI" id="CHEBI:15378"/>
        <dbReference type="ChEBI" id="CHEBI:17319"/>
        <dbReference type="ChEBI" id="CHEBI:29034"/>
        <dbReference type="ChEBI" id="CHEBI:29919"/>
        <dbReference type="ChEBI" id="CHEBI:33722"/>
        <dbReference type="ChEBI" id="CHEBI:33737"/>
        <dbReference type="ChEBI" id="CHEBI:33738"/>
        <dbReference type="ChEBI" id="CHEBI:57844"/>
        <dbReference type="ChEBI" id="CHEBI:59789"/>
        <dbReference type="ChEBI" id="CHEBI:78809"/>
        <dbReference type="ChEBI" id="CHEBI:83100"/>
        <dbReference type="EC" id="2.8.1.8"/>
    </reaction>
</comment>
<comment type="cofactor">
    <cofactor evidence="1">
        <name>[4Fe-4S] cluster</name>
        <dbReference type="ChEBI" id="CHEBI:49883"/>
    </cofactor>
    <text evidence="1">Binds 2 [4Fe-4S] clusters per subunit. One cluster is coordinated with 3 cysteines and an exchangeable S-adenosyl-L-methionine.</text>
</comment>
<comment type="pathway">
    <text evidence="1">Protein modification; protein lipoylation via endogenous pathway; protein N(6)-(lipoyl)lysine from octanoyl-[acyl-carrier-protein]: step 2/2.</text>
</comment>
<comment type="subcellular location">
    <subcellularLocation>
        <location evidence="1">Cytoplasm</location>
    </subcellularLocation>
</comment>
<comment type="similarity">
    <text evidence="1">Belongs to the radical SAM superfamily. Lipoyl synthase family.</text>
</comment>
<sequence>MNRPERLQPGVKLRDADKVSRIPVKIVPSERETMLRKPDWLRVKLPASNQRILEIKQALRSNGLHSVCEEASCPNLAECFNHGTATFMILGAICTRRCPFCDVAHGRPLKPDAEEPVKLAQTIRDMKLKYVVITSVDRDDLRDGGAQHFADCIREIRKLNPEIKIEILVPDFRGRIDAALDILSTEPPDVFNHNLETAPMHYRKARPGANYQWSLDLLKRFKERHPNVPTKSGLMMGLGETNEEIAQVLRDLREHKVEMLTLGQYLQPSKFHLPVERYVSPAEFDELKVLADELGFTHAACGPLVRSSYHADLQAQGKEVK</sequence>
<dbReference type="EC" id="2.8.1.8" evidence="1"/>
<dbReference type="EMBL" id="CP000469">
    <property type="protein sequence ID" value="ABK47223.1"/>
    <property type="molecule type" value="Genomic_DNA"/>
</dbReference>
<dbReference type="RefSeq" id="WP_011621776.1">
    <property type="nucleotide sequence ID" value="NC_008577.1"/>
</dbReference>
<dbReference type="SMR" id="A0KTV4"/>
<dbReference type="STRING" id="94122.Shewana3_0988"/>
<dbReference type="KEGG" id="shn:Shewana3_0988"/>
<dbReference type="eggNOG" id="COG0320">
    <property type="taxonomic scope" value="Bacteria"/>
</dbReference>
<dbReference type="HOGENOM" id="CLU_033144_2_1_6"/>
<dbReference type="OrthoDB" id="9787898at2"/>
<dbReference type="UniPathway" id="UPA00538">
    <property type="reaction ID" value="UER00593"/>
</dbReference>
<dbReference type="Proteomes" id="UP000002589">
    <property type="component" value="Chromosome"/>
</dbReference>
<dbReference type="GO" id="GO:0005737">
    <property type="term" value="C:cytoplasm"/>
    <property type="evidence" value="ECO:0007669"/>
    <property type="project" value="UniProtKB-SubCell"/>
</dbReference>
<dbReference type="GO" id="GO:0051539">
    <property type="term" value="F:4 iron, 4 sulfur cluster binding"/>
    <property type="evidence" value="ECO:0007669"/>
    <property type="project" value="UniProtKB-UniRule"/>
</dbReference>
<dbReference type="GO" id="GO:0016992">
    <property type="term" value="F:lipoate synthase activity"/>
    <property type="evidence" value="ECO:0007669"/>
    <property type="project" value="UniProtKB-UniRule"/>
</dbReference>
<dbReference type="GO" id="GO:0046872">
    <property type="term" value="F:metal ion binding"/>
    <property type="evidence" value="ECO:0007669"/>
    <property type="project" value="UniProtKB-KW"/>
</dbReference>
<dbReference type="CDD" id="cd01335">
    <property type="entry name" value="Radical_SAM"/>
    <property type="match status" value="1"/>
</dbReference>
<dbReference type="FunFam" id="3.20.20.70:FF:000023">
    <property type="entry name" value="Lipoyl synthase"/>
    <property type="match status" value="1"/>
</dbReference>
<dbReference type="Gene3D" id="3.20.20.70">
    <property type="entry name" value="Aldolase class I"/>
    <property type="match status" value="1"/>
</dbReference>
<dbReference type="HAMAP" id="MF_00206">
    <property type="entry name" value="Lipoyl_synth"/>
    <property type="match status" value="1"/>
</dbReference>
<dbReference type="InterPro" id="IPR013785">
    <property type="entry name" value="Aldolase_TIM"/>
</dbReference>
<dbReference type="InterPro" id="IPR006638">
    <property type="entry name" value="Elp3/MiaA/NifB-like_rSAM"/>
</dbReference>
<dbReference type="InterPro" id="IPR003698">
    <property type="entry name" value="Lipoyl_synth"/>
</dbReference>
<dbReference type="InterPro" id="IPR007197">
    <property type="entry name" value="rSAM"/>
</dbReference>
<dbReference type="NCBIfam" id="TIGR00510">
    <property type="entry name" value="lipA"/>
    <property type="match status" value="1"/>
</dbReference>
<dbReference type="NCBIfam" id="NF004019">
    <property type="entry name" value="PRK05481.1"/>
    <property type="match status" value="1"/>
</dbReference>
<dbReference type="NCBIfam" id="NF009544">
    <property type="entry name" value="PRK12928.1"/>
    <property type="match status" value="1"/>
</dbReference>
<dbReference type="PANTHER" id="PTHR10949">
    <property type="entry name" value="LIPOYL SYNTHASE"/>
    <property type="match status" value="1"/>
</dbReference>
<dbReference type="PANTHER" id="PTHR10949:SF0">
    <property type="entry name" value="LIPOYL SYNTHASE, MITOCHONDRIAL"/>
    <property type="match status" value="1"/>
</dbReference>
<dbReference type="Pfam" id="PF04055">
    <property type="entry name" value="Radical_SAM"/>
    <property type="match status" value="1"/>
</dbReference>
<dbReference type="PIRSF" id="PIRSF005963">
    <property type="entry name" value="Lipoyl_synth"/>
    <property type="match status" value="1"/>
</dbReference>
<dbReference type="SFLD" id="SFLDF00271">
    <property type="entry name" value="lipoyl_synthase"/>
    <property type="match status" value="1"/>
</dbReference>
<dbReference type="SFLD" id="SFLDS00029">
    <property type="entry name" value="Radical_SAM"/>
    <property type="match status" value="1"/>
</dbReference>
<dbReference type="SMART" id="SM00729">
    <property type="entry name" value="Elp3"/>
    <property type="match status" value="1"/>
</dbReference>
<dbReference type="SUPFAM" id="SSF102114">
    <property type="entry name" value="Radical SAM enzymes"/>
    <property type="match status" value="1"/>
</dbReference>
<dbReference type="PROSITE" id="PS51918">
    <property type="entry name" value="RADICAL_SAM"/>
    <property type="match status" value="1"/>
</dbReference>
<reference key="1">
    <citation type="submission" date="2006-09" db="EMBL/GenBank/DDBJ databases">
        <title>Complete sequence of chromosome 1 of Shewanella sp. ANA-3.</title>
        <authorList>
            <person name="Copeland A."/>
            <person name="Lucas S."/>
            <person name="Lapidus A."/>
            <person name="Barry K."/>
            <person name="Detter J.C."/>
            <person name="Glavina del Rio T."/>
            <person name="Hammon N."/>
            <person name="Israni S."/>
            <person name="Dalin E."/>
            <person name="Tice H."/>
            <person name="Pitluck S."/>
            <person name="Chertkov O."/>
            <person name="Brettin T."/>
            <person name="Bruce D."/>
            <person name="Han C."/>
            <person name="Tapia R."/>
            <person name="Gilna P."/>
            <person name="Schmutz J."/>
            <person name="Larimer F."/>
            <person name="Land M."/>
            <person name="Hauser L."/>
            <person name="Kyrpides N."/>
            <person name="Kim E."/>
            <person name="Newman D."/>
            <person name="Salticov C."/>
            <person name="Konstantinidis K."/>
            <person name="Klappenback J."/>
            <person name="Tiedje J."/>
            <person name="Richardson P."/>
        </authorList>
    </citation>
    <scope>NUCLEOTIDE SEQUENCE [LARGE SCALE GENOMIC DNA]</scope>
    <source>
        <strain>ANA-3</strain>
    </source>
</reference>
<gene>
    <name evidence="1" type="primary">lipA</name>
    <name type="ordered locus">Shewana3_0988</name>
</gene>